<comment type="function">
    <text evidence="1">Could catalyze the elongation of hydroxybenzoyl-CoA as well as elongation of the aliphatic precursor involved in the synthesis of phthiocerol dimycocerosate (DIM).</text>
</comment>
<comment type="pathway">
    <text>Lipid metabolism; fatty acid biosynthesis.</text>
</comment>
<comment type="subunit">
    <text evidence="1">Homodimer.</text>
</comment>
<comment type="similarity">
    <text evidence="2">Belongs to the thiolase-like superfamily. Chalcone/stilbene synthases family.</text>
</comment>
<sequence length="353" mass="37146">MSVIAGVFGALPPYRYSQRELTDSFVSIPDFEGYEDIVRQLHASAKVNSRHLVLPLEKYPKLTDFGEANKIFIEKAVDLGVQALAGALDESGLRPEDLDVLITATVTGLAVPSLDARIAGRLGLRADVRRVPLFGLGCVAGAAGVARLHDYLRGAPDGVAALVSVELCSLTYPGYKPTLPGLVGSALFADGAAAVVAAGVKRAQDIGADGPDILDSRSHLYPDSLRTMGYDVGSAGFELVLSRDLAAVVEQYLGNDVTTFLASHGLSTTDVGAWVTHPGGPKIINAITETLDLSPQALELTWRSLGEIGNLSSASVLHVLRDTIAKPPPSGSPGLMIAMGPGFCSELVLLRWH</sequence>
<organism>
    <name type="scientific">Mycobacterium tuberculosis (strain CDC 1551 / Oshkosh)</name>
    <dbReference type="NCBI Taxonomy" id="83331"/>
    <lineage>
        <taxon>Bacteria</taxon>
        <taxon>Bacillati</taxon>
        <taxon>Actinomycetota</taxon>
        <taxon>Actinomycetes</taxon>
        <taxon>Mycobacteriales</taxon>
        <taxon>Mycobacteriaceae</taxon>
        <taxon>Mycobacterium</taxon>
        <taxon>Mycobacterium tuberculosis complex</taxon>
    </lineage>
</organism>
<gene>
    <name type="primary">pks10</name>
    <name type="ordered locus">MT1698</name>
</gene>
<proteinExistence type="inferred from homology"/>
<accession>P9WPF4</accession>
<accession>L0T8X1</accession>
<accession>P94995</accession>
<accession>Q7D876</accession>
<keyword id="KW-0012">Acyltransferase</keyword>
<keyword id="KW-0276">Fatty acid metabolism</keyword>
<keyword id="KW-0443">Lipid metabolism</keyword>
<keyword id="KW-1185">Reference proteome</keyword>
<keyword id="KW-0808">Transferase</keyword>
<reference key="1">
    <citation type="journal article" date="2002" name="J. Bacteriol.">
        <title>Whole-genome comparison of Mycobacterium tuberculosis clinical and laboratory strains.</title>
        <authorList>
            <person name="Fleischmann R.D."/>
            <person name="Alland D."/>
            <person name="Eisen J.A."/>
            <person name="Carpenter L."/>
            <person name="White O."/>
            <person name="Peterson J.D."/>
            <person name="DeBoy R.T."/>
            <person name="Dodson R.J."/>
            <person name="Gwinn M.L."/>
            <person name="Haft D.H."/>
            <person name="Hickey E.K."/>
            <person name="Kolonay J.F."/>
            <person name="Nelson W.C."/>
            <person name="Umayam L.A."/>
            <person name="Ermolaeva M.D."/>
            <person name="Salzberg S.L."/>
            <person name="Delcher A."/>
            <person name="Utterback T.R."/>
            <person name="Weidman J.F."/>
            <person name="Khouri H.M."/>
            <person name="Gill J."/>
            <person name="Mikula A."/>
            <person name="Bishai W."/>
            <person name="Jacobs W.R. Jr."/>
            <person name="Venter J.C."/>
            <person name="Fraser C.M."/>
        </authorList>
    </citation>
    <scope>NUCLEOTIDE SEQUENCE [LARGE SCALE GENOMIC DNA]</scope>
    <source>
        <strain>CDC 1551 / Oshkosh</strain>
    </source>
</reference>
<dbReference type="EC" id="2.3.1.-"/>
<dbReference type="EMBL" id="AE000516">
    <property type="protein sequence ID" value="AAK45967.1"/>
    <property type="molecule type" value="Genomic_DNA"/>
</dbReference>
<dbReference type="PIR" id="G70621">
    <property type="entry name" value="G70621"/>
</dbReference>
<dbReference type="RefSeq" id="WP_003408181.1">
    <property type="nucleotide sequence ID" value="NZ_KK341227.1"/>
</dbReference>
<dbReference type="SMR" id="P9WPF4"/>
<dbReference type="KEGG" id="mtc:MT1698"/>
<dbReference type="PATRIC" id="fig|83331.31.peg.1825"/>
<dbReference type="HOGENOM" id="CLU_034992_0_1_11"/>
<dbReference type="UniPathway" id="UPA00094"/>
<dbReference type="Proteomes" id="UP000001020">
    <property type="component" value="Chromosome"/>
</dbReference>
<dbReference type="GO" id="GO:0016747">
    <property type="term" value="F:acyltransferase activity, transferring groups other than amino-acyl groups"/>
    <property type="evidence" value="ECO:0007669"/>
    <property type="project" value="InterPro"/>
</dbReference>
<dbReference type="GO" id="GO:0006633">
    <property type="term" value="P:fatty acid biosynthetic process"/>
    <property type="evidence" value="ECO:0007669"/>
    <property type="project" value="UniProtKB-UniPathway"/>
</dbReference>
<dbReference type="GO" id="GO:0030639">
    <property type="term" value="P:polyketide biosynthetic process"/>
    <property type="evidence" value="ECO:0007669"/>
    <property type="project" value="TreeGrafter"/>
</dbReference>
<dbReference type="CDD" id="cd00831">
    <property type="entry name" value="CHS_like"/>
    <property type="match status" value="1"/>
</dbReference>
<dbReference type="FunFam" id="3.40.47.10:FF:000053">
    <property type="entry name" value="Alpha-pyrone synthesis polyketide synthase"/>
    <property type="match status" value="1"/>
</dbReference>
<dbReference type="FunFam" id="3.40.47.10:FF:000014">
    <property type="entry name" value="Chalcone synthase 1"/>
    <property type="match status" value="1"/>
</dbReference>
<dbReference type="Gene3D" id="3.40.47.10">
    <property type="match status" value="2"/>
</dbReference>
<dbReference type="InterPro" id="IPR012328">
    <property type="entry name" value="Chalcone/stilbene_synt_C"/>
</dbReference>
<dbReference type="InterPro" id="IPR001099">
    <property type="entry name" value="Chalcone/stilbene_synt_N"/>
</dbReference>
<dbReference type="InterPro" id="IPR011141">
    <property type="entry name" value="Polyketide_synthase_type-III"/>
</dbReference>
<dbReference type="InterPro" id="IPR016039">
    <property type="entry name" value="Thiolase-like"/>
</dbReference>
<dbReference type="PANTHER" id="PTHR11877:SF99">
    <property type="entry name" value="1,3,6,8-TETRAHYDROXYNAPHTHALENE SYNTHASE"/>
    <property type="match status" value="1"/>
</dbReference>
<dbReference type="PANTHER" id="PTHR11877">
    <property type="entry name" value="HYDROXYMETHYLGLUTARYL-COA SYNTHASE"/>
    <property type="match status" value="1"/>
</dbReference>
<dbReference type="Pfam" id="PF02797">
    <property type="entry name" value="Chal_sti_synt_C"/>
    <property type="match status" value="1"/>
</dbReference>
<dbReference type="Pfam" id="PF00195">
    <property type="entry name" value="Chal_sti_synt_N"/>
    <property type="match status" value="1"/>
</dbReference>
<dbReference type="PIRSF" id="PIRSF000451">
    <property type="entry name" value="PKS_III"/>
    <property type="match status" value="1"/>
</dbReference>
<dbReference type="SUPFAM" id="SSF53901">
    <property type="entry name" value="Thiolase-like"/>
    <property type="match status" value="1"/>
</dbReference>
<protein>
    <recommendedName>
        <fullName>Polyketide synthase-like Pks10</fullName>
        <ecNumber>2.3.1.-</ecNumber>
    </recommendedName>
    <alternativeName>
        <fullName>Chalcone synthase-like protein</fullName>
        <shortName>CHS-like</shortName>
    </alternativeName>
    <alternativeName>
        <fullName>Polyketide synthase type III Pks10</fullName>
    </alternativeName>
</protein>
<evidence type="ECO:0000250" key="1"/>
<evidence type="ECO:0000305" key="2"/>
<feature type="chain" id="PRO_0000426961" description="Polyketide synthase-like Pks10">
    <location>
        <begin position="1"/>
        <end position="353"/>
    </location>
</feature>
<feature type="active site" evidence="1">
    <location>
        <position position="138"/>
    </location>
</feature>
<name>PKS10_MYCTO</name>